<dbReference type="EMBL" id="K00428">
    <property type="status" value="NOT_ANNOTATED_CDS"/>
    <property type="molecule type" value="Genomic_DNA"/>
</dbReference>
<dbReference type="EMBL" id="Z75095">
    <property type="protein sequence ID" value="CAA99396.1"/>
    <property type="molecule type" value="Genomic_DNA"/>
</dbReference>
<dbReference type="EMBL" id="BK006948">
    <property type="protein sequence ID" value="DAA10959.1"/>
    <property type="molecule type" value="Genomic_DNA"/>
</dbReference>
<dbReference type="PIR" id="A03520">
    <property type="entry name" value="EFBYT"/>
</dbReference>
<dbReference type="RefSeq" id="NP_014830.1">
    <property type="nucleotide sequence ID" value="NM_001183606.1"/>
</dbReference>
<dbReference type="SMR" id="P02992"/>
<dbReference type="BioGRID" id="34582">
    <property type="interactions" value="229"/>
</dbReference>
<dbReference type="DIP" id="DIP-4130N"/>
<dbReference type="FunCoup" id="P02992">
    <property type="interactions" value="1088"/>
</dbReference>
<dbReference type="IntAct" id="P02992">
    <property type="interactions" value="35"/>
</dbReference>
<dbReference type="MINT" id="P02992"/>
<dbReference type="STRING" id="4932.YOR187W"/>
<dbReference type="iPTMnet" id="P02992"/>
<dbReference type="PaxDb" id="4932-YOR187W"/>
<dbReference type="PeptideAtlas" id="P02992"/>
<dbReference type="EnsemblFungi" id="YOR187W_mRNA">
    <property type="protein sequence ID" value="YOR187W"/>
    <property type="gene ID" value="YOR187W"/>
</dbReference>
<dbReference type="GeneID" id="854359"/>
<dbReference type="KEGG" id="sce:YOR187W"/>
<dbReference type="AGR" id="SGD:S000005713"/>
<dbReference type="SGD" id="S000005713">
    <property type="gene designation" value="TUF1"/>
</dbReference>
<dbReference type="VEuPathDB" id="FungiDB:YOR187W"/>
<dbReference type="eggNOG" id="KOG0460">
    <property type="taxonomic scope" value="Eukaryota"/>
</dbReference>
<dbReference type="GeneTree" id="ENSGT00940000156748"/>
<dbReference type="HOGENOM" id="CLU_007265_0_1_1"/>
<dbReference type="InParanoid" id="P02992"/>
<dbReference type="OMA" id="EGDKEWG"/>
<dbReference type="OrthoDB" id="2067at2759"/>
<dbReference type="BioCyc" id="YEAST:G3O-33697-MONOMER"/>
<dbReference type="UniPathway" id="UPA00345"/>
<dbReference type="BioGRID-ORCS" id="854359">
    <property type="hits" value="4 hits in 10 CRISPR screens"/>
</dbReference>
<dbReference type="PRO" id="PR:P02992"/>
<dbReference type="Proteomes" id="UP000002311">
    <property type="component" value="Chromosome XV"/>
</dbReference>
<dbReference type="RNAct" id="P02992">
    <property type="molecule type" value="protein"/>
</dbReference>
<dbReference type="GO" id="GO:0005739">
    <property type="term" value="C:mitochondrion"/>
    <property type="evidence" value="ECO:0000314"/>
    <property type="project" value="SGD"/>
</dbReference>
<dbReference type="GO" id="GO:0005525">
    <property type="term" value="F:GTP binding"/>
    <property type="evidence" value="ECO:0007669"/>
    <property type="project" value="UniProtKB-KW"/>
</dbReference>
<dbReference type="GO" id="GO:0003924">
    <property type="term" value="F:GTPase activity"/>
    <property type="evidence" value="ECO:0000314"/>
    <property type="project" value="SGD"/>
</dbReference>
<dbReference type="GO" id="GO:0003746">
    <property type="term" value="F:translation elongation factor activity"/>
    <property type="evidence" value="ECO:0000314"/>
    <property type="project" value="SGD"/>
</dbReference>
<dbReference type="GO" id="GO:0032543">
    <property type="term" value="P:mitochondrial translation"/>
    <property type="evidence" value="ECO:0000314"/>
    <property type="project" value="SGD"/>
</dbReference>
<dbReference type="GO" id="GO:0070125">
    <property type="term" value="P:mitochondrial translational elongation"/>
    <property type="evidence" value="ECO:0000315"/>
    <property type="project" value="SGD"/>
</dbReference>
<dbReference type="GO" id="GO:0006417">
    <property type="term" value="P:regulation of translation"/>
    <property type="evidence" value="ECO:0007669"/>
    <property type="project" value="UniProtKB-ARBA"/>
</dbReference>
<dbReference type="CDD" id="cd01884">
    <property type="entry name" value="EF_Tu"/>
    <property type="match status" value="1"/>
</dbReference>
<dbReference type="CDD" id="cd03697">
    <property type="entry name" value="EFTU_II"/>
    <property type="match status" value="1"/>
</dbReference>
<dbReference type="CDD" id="cd03707">
    <property type="entry name" value="EFTU_III"/>
    <property type="match status" value="1"/>
</dbReference>
<dbReference type="FunFam" id="2.40.30.10:FF:000001">
    <property type="entry name" value="Elongation factor Tu"/>
    <property type="match status" value="1"/>
</dbReference>
<dbReference type="FunFam" id="3.40.50.300:FF:000003">
    <property type="entry name" value="Elongation factor Tu"/>
    <property type="match status" value="1"/>
</dbReference>
<dbReference type="Gene3D" id="3.40.50.300">
    <property type="entry name" value="P-loop containing nucleotide triphosphate hydrolases"/>
    <property type="match status" value="1"/>
</dbReference>
<dbReference type="Gene3D" id="2.40.30.10">
    <property type="entry name" value="Translation factors"/>
    <property type="match status" value="2"/>
</dbReference>
<dbReference type="HAMAP" id="MF_00118_B">
    <property type="entry name" value="EF_Tu_B"/>
    <property type="match status" value="1"/>
</dbReference>
<dbReference type="InterPro" id="IPR041709">
    <property type="entry name" value="EF-Tu_GTP-bd"/>
</dbReference>
<dbReference type="InterPro" id="IPR050055">
    <property type="entry name" value="EF-Tu_GTPase"/>
</dbReference>
<dbReference type="InterPro" id="IPR004161">
    <property type="entry name" value="EFTu-like_2"/>
</dbReference>
<dbReference type="InterPro" id="IPR033720">
    <property type="entry name" value="EFTU_2"/>
</dbReference>
<dbReference type="InterPro" id="IPR031157">
    <property type="entry name" value="G_TR_CS"/>
</dbReference>
<dbReference type="InterPro" id="IPR027417">
    <property type="entry name" value="P-loop_NTPase"/>
</dbReference>
<dbReference type="InterPro" id="IPR005225">
    <property type="entry name" value="Small_GTP-bd"/>
</dbReference>
<dbReference type="InterPro" id="IPR000795">
    <property type="entry name" value="T_Tr_GTP-bd_dom"/>
</dbReference>
<dbReference type="InterPro" id="IPR009000">
    <property type="entry name" value="Transl_B-barrel_sf"/>
</dbReference>
<dbReference type="InterPro" id="IPR009001">
    <property type="entry name" value="Transl_elong_EF1A/Init_IF2_C"/>
</dbReference>
<dbReference type="InterPro" id="IPR004541">
    <property type="entry name" value="Transl_elong_EFTu/EF1A_bac/org"/>
</dbReference>
<dbReference type="InterPro" id="IPR004160">
    <property type="entry name" value="Transl_elong_EFTu/EF1A_C"/>
</dbReference>
<dbReference type="NCBIfam" id="TIGR00485">
    <property type="entry name" value="EF-Tu"/>
    <property type="match status" value="1"/>
</dbReference>
<dbReference type="NCBIfam" id="NF000766">
    <property type="entry name" value="PRK00049.1"/>
    <property type="match status" value="1"/>
</dbReference>
<dbReference type="NCBIfam" id="NF009372">
    <property type="entry name" value="PRK12735.1"/>
    <property type="match status" value="1"/>
</dbReference>
<dbReference type="NCBIfam" id="NF009373">
    <property type="entry name" value="PRK12736.1"/>
    <property type="match status" value="1"/>
</dbReference>
<dbReference type="NCBIfam" id="TIGR00231">
    <property type="entry name" value="small_GTP"/>
    <property type="match status" value="1"/>
</dbReference>
<dbReference type="PANTHER" id="PTHR43721:SF36">
    <property type="entry name" value="ELONGATION FACTOR TU, MITOCHONDRIAL"/>
    <property type="match status" value="1"/>
</dbReference>
<dbReference type="PANTHER" id="PTHR43721">
    <property type="entry name" value="ELONGATION FACTOR TU-RELATED"/>
    <property type="match status" value="1"/>
</dbReference>
<dbReference type="Pfam" id="PF00009">
    <property type="entry name" value="GTP_EFTU"/>
    <property type="match status" value="1"/>
</dbReference>
<dbReference type="Pfam" id="PF03144">
    <property type="entry name" value="GTP_EFTU_D2"/>
    <property type="match status" value="1"/>
</dbReference>
<dbReference type="Pfam" id="PF03143">
    <property type="entry name" value="GTP_EFTU_D3"/>
    <property type="match status" value="1"/>
</dbReference>
<dbReference type="PRINTS" id="PR00315">
    <property type="entry name" value="ELONGATNFCT"/>
</dbReference>
<dbReference type="SUPFAM" id="SSF50465">
    <property type="entry name" value="EF-Tu/eEF-1alpha/eIF2-gamma C-terminal domain"/>
    <property type="match status" value="1"/>
</dbReference>
<dbReference type="SUPFAM" id="SSF52540">
    <property type="entry name" value="P-loop containing nucleoside triphosphate hydrolases"/>
    <property type="match status" value="1"/>
</dbReference>
<dbReference type="SUPFAM" id="SSF50447">
    <property type="entry name" value="Translation proteins"/>
    <property type="match status" value="1"/>
</dbReference>
<dbReference type="PROSITE" id="PS00301">
    <property type="entry name" value="G_TR_1"/>
    <property type="match status" value="1"/>
</dbReference>
<dbReference type="PROSITE" id="PS51722">
    <property type="entry name" value="G_TR_2"/>
    <property type="match status" value="1"/>
</dbReference>
<feature type="transit peptide" description="Mitochondrion" evidence="7">
    <location>
        <begin position="1"/>
        <end position="38"/>
    </location>
</feature>
<feature type="chain" id="PRO_0000007465" description="Elongation factor Tu, mitochondrial">
    <location>
        <begin position="39"/>
        <end position="437"/>
    </location>
</feature>
<feature type="domain" description="tr-type G">
    <location>
        <begin position="46"/>
        <end position="242"/>
    </location>
</feature>
<feature type="region of interest" description="G1" evidence="1">
    <location>
        <begin position="55"/>
        <end position="62"/>
    </location>
</feature>
<feature type="region of interest" description="G2" evidence="1">
    <location>
        <begin position="96"/>
        <end position="100"/>
    </location>
</feature>
<feature type="region of interest" description="G3" evidence="1">
    <location>
        <begin position="117"/>
        <end position="120"/>
    </location>
</feature>
<feature type="region of interest" description="G4" evidence="1">
    <location>
        <begin position="172"/>
        <end position="175"/>
    </location>
</feature>
<feature type="region of interest" description="G5" evidence="1">
    <location>
        <begin position="210"/>
        <end position="212"/>
    </location>
</feature>
<feature type="binding site" evidence="1">
    <location>
        <begin position="55"/>
        <end position="62"/>
    </location>
    <ligand>
        <name>GTP</name>
        <dbReference type="ChEBI" id="CHEBI:37565"/>
    </ligand>
</feature>
<feature type="binding site" evidence="1">
    <location>
        <begin position="117"/>
        <end position="121"/>
    </location>
    <ligand>
        <name>GTP</name>
        <dbReference type="ChEBI" id="CHEBI:37565"/>
    </ligand>
</feature>
<feature type="binding site" evidence="1">
    <location>
        <begin position="172"/>
        <end position="175"/>
    </location>
    <ligand>
        <name>GTP</name>
        <dbReference type="ChEBI" id="CHEBI:37565"/>
    </ligand>
</feature>
<gene>
    <name type="primary">TUF1</name>
    <name type="synonym">TUFM</name>
    <name type="ordered locus">YOR187W</name>
</gene>
<reference key="1">
    <citation type="journal article" date="1983" name="Proc. Natl. Acad. Sci. U.S.A.">
        <title>Molecular cloning and sequence determination of the nuclear gene coding for mitochondrial elongation factor Tu of Saccharomyces cerevisiae.</title>
        <authorList>
            <person name="Nagata S."/>
            <person name="Tsunetsugu-Yokota Y."/>
            <person name="Naito A."/>
            <person name="Kaziro Y."/>
        </authorList>
    </citation>
    <scope>NUCLEOTIDE SEQUENCE [GENOMIC DNA]</scope>
</reference>
<reference key="2">
    <citation type="journal article" date="1997" name="Nature">
        <title>The nucleotide sequence of Saccharomyces cerevisiae chromosome XV.</title>
        <authorList>
            <person name="Dujon B."/>
            <person name="Albermann K."/>
            <person name="Aldea M."/>
            <person name="Alexandraki D."/>
            <person name="Ansorge W."/>
            <person name="Arino J."/>
            <person name="Benes V."/>
            <person name="Bohn C."/>
            <person name="Bolotin-Fukuhara M."/>
            <person name="Bordonne R."/>
            <person name="Boyer J."/>
            <person name="Camasses A."/>
            <person name="Casamayor A."/>
            <person name="Casas C."/>
            <person name="Cheret G."/>
            <person name="Cziepluch C."/>
            <person name="Daignan-Fornier B."/>
            <person name="Dang V.-D."/>
            <person name="de Haan M."/>
            <person name="Delius H."/>
            <person name="Durand P."/>
            <person name="Fairhead C."/>
            <person name="Feldmann H."/>
            <person name="Gaillon L."/>
            <person name="Galisson F."/>
            <person name="Gamo F.-J."/>
            <person name="Gancedo C."/>
            <person name="Goffeau A."/>
            <person name="Goulding S.E."/>
            <person name="Grivell L.A."/>
            <person name="Habbig B."/>
            <person name="Hand N.J."/>
            <person name="Hani J."/>
            <person name="Hattenhorst U."/>
            <person name="Hebling U."/>
            <person name="Hernando Y."/>
            <person name="Herrero E."/>
            <person name="Heumann K."/>
            <person name="Hiesel R."/>
            <person name="Hilger F."/>
            <person name="Hofmann B."/>
            <person name="Hollenberg C.P."/>
            <person name="Hughes B."/>
            <person name="Jauniaux J.-C."/>
            <person name="Kalogeropoulos A."/>
            <person name="Katsoulou C."/>
            <person name="Kordes E."/>
            <person name="Lafuente M.J."/>
            <person name="Landt O."/>
            <person name="Louis E.J."/>
            <person name="Maarse A.C."/>
            <person name="Madania A."/>
            <person name="Mannhaupt G."/>
            <person name="Marck C."/>
            <person name="Martin R.P."/>
            <person name="Mewes H.-W."/>
            <person name="Michaux G."/>
            <person name="Paces V."/>
            <person name="Parle-McDermott A.G."/>
            <person name="Pearson B.M."/>
            <person name="Perrin A."/>
            <person name="Pettersson B."/>
            <person name="Poch O."/>
            <person name="Pohl T.M."/>
            <person name="Poirey R."/>
            <person name="Portetelle D."/>
            <person name="Pujol A."/>
            <person name="Purnelle B."/>
            <person name="Ramezani Rad M."/>
            <person name="Rechmann S."/>
            <person name="Schwager C."/>
            <person name="Schweizer M."/>
            <person name="Sor F."/>
            <person name="Sterky F."/>
            <person name="Tarassov I.A."/>
            <person name="Teodoru C."/>
            <person name="Tettelin H."/>
            <person name="Thierry A."/>
            <person name="Tobiasch E."/>
            <person name="Tzermia M."/>
            <person name="Uhlen M."/>
            <person name="Unseld M."/>
            <person name="Valens M."/>
            <person name="Vandenbol M."/>
            <person name="Vetter I."/>
            <person name="Vlcek C."/>
            <person name="Voet M."/>
            <person name="Volckaert G."/>
            <person name="Voss H."/>
            <person name="Wambutt R."/>
            <person name="Wedler H."/>
            <person name="Wiemann S."/>
            <person name="Winsor B."/>
            <person name="Wolfe K.H."/>
            <person name="Zollner A."/>
            <person name="Zumstein E."/>
            <person name="Kleine K."/>
        </authorList>
    </citation>
    <scope>NUCLEOTIDE SEQUENCE [LARGE SCALE GENOMIC DNA]</scope>
    <source>
        <strain>ATCC 204508 / S288c</strain>
    </source>
</reference>
<reference key="3">
    <citation type="journal article" date="2014" name="G3 (Bethesda)">
        <title>The reference genome sequence of Saccharomyces cerevisiae: Then and now.</title>
        <authorList>
            <person name="Engel S.R."/>
            <person name="Dietrich F.S."/>
            <person name="Fisk D.G."/>
            <person name="Binkley G."/>
            <person name="Balakrishnan R."/>
            <person name="Costanzo M.C."/>
            <person name="Dwight S.S."/>
            <person name="Hitz B.C."/>
            <person name="Karra K."/>
            <person name="Nash R.S."/>
            <person name="Weng S."/>
            <person name="Wong E.D."/>
            <person name="Lloyd P."/>
            <person name="Skrzypek M.S."/>
            <person name="Miyasato S.R."/>
            <person name="Simison M."/>
            <person name="Cherry J.M."/>
        </authorList>
    </citation>
    <scope>GENOME REANNOTATION</scope>
    <source>
        <strain>ATCC 204508 / S288c</strain>
    </source>
</reference>
<reference key="4">
    <citation type="journal article" date="1985" name="EMBO J.">
        <title>Mitochondrial protein synthesis is required for maintenance of intact mitochondrial genomes in Saccharomyces cerevisiae.</title>
        <authorList>
            <person name="Myers A.M."/>
            <person name="Pape L.K."/>
            <person name="Tzagoloff A."/>
        </authorList>
    </citation>
    <scope>FUNCTION</scope>
</reference>
<reference key="5">
    <citation type="journal article" date="1995" name="J. Biol. Chem.">
        <title>Prediction and identification of new natural substrates of the yeast mitochondrial intermediate peptidase.</title>
        <authorList>
            <person name="Branda S.S."/>
            <person name="Isaya G."/>
        </authorList>
    </citation>
    <scope>CLEAVAGE BY MPP AND MIP</scope>
    <scope>IDENTIFICATION OF PROBABLE CLEAVAGE SITE</scope>
</reference>
<reference key="6">
    <citation type="journal article" date="2003" name="Nature">
        <title>Global analysis of protein localization in budding yeast.</title>
        <authorList>
            <person name="Huh W.-K."/>
            <person name="Falvo J.V."/>
            <person name="Gerke L.C."/>
            <person name="Carroll A.S."/>
            <person name="Howson R.W."/>
            <person name="Weissman J.S."/>
            <person name="O'Shea E.K."/>
        </authorList>
    </citation>
    <scope>SUBCELLULAR LOCATION [LARGE SCALE ANALYSIS]</scope>
</reference>
<reference key="7">
    <citation type="journal article" date="2003" name="Nature">
        <title>Global analysis of protein expression in yeast.</title>
        <authorList>
            <person name="Ghaemmaghami S."/>
            <person name="Huh W.-K."/>
            <person name="Bower K."/>
            <person name="Howson R.W."/>
            <person name="Belle A."/>
            <person name="Dephoure N."/>
            <person name="O'Shea E.K."/>
            <person name="Weissman J.S."/>
        </authorList>
    </citation>
    <scope>LEVEL OF PROTEIN EXPRESSION [LARGE SCALE ANALYSIS]</scope>
</reference>
<reference key="8">
    <citation type="journal article" date="2003" name="Proc. Natl. Acad. Sci. U.S.A.">
        <title>The proteome of Saccharomyces cerevisiae mitochondria.</title>
        <authorList>
            <person name="Sickmann A."/>
            <person name="Reinders J."/>
            <person name="Wagner Y."/>
            <person name="Joppich C."/>
            <person name="Zahedi R.P."/>
            <person name="Meyer H.E."/>
            <person name="Schoenfisch B."/>
            <person name="Perschil I."/>
            <person name="Chacinska A."/>
            <person name="Guiard B."/>
            <person name="Rehling P."/>
            <person name="Pfanner N."/>
            <person name="Meisinger C."/>
        </authorList>
    </citation>
    <scope>SUBCELLULAR LOCATION [LARGE SCALE ANALYSIS]</scope>
    <source>
        <strain>ATCC 76625 / YPH499</strain>
    </source>
</reference>
<reference key="9">
    <citation type="journal article" date="2008" name="Mol. Cell. Proteomics">
        <title>A multidimensional chromatography technology for in-depth phosphoproteome analysis.</title>
        <authorList>
            <person name="Albuquerque C.P."/>
            <person name="Smolka M.B."/>
            <person name="Payne S.H."/>
            <person name="Bafna V."/>
            <person name="Eng J."/>
            <person name="Zhou H."/>
        </authorList>
    </citation>
    <scope>IDENTIFICATION BY MASS SPECTROMETRY [LARGE SCALE ANALYSIS]</scope>
</reference>
<protein>
    <recommendedName>
        <fullName>Elongation factor Tu, mitochondrial</fullName>
    </recommendedName>
    <alternativeName>
        <fullName>tufM</fullName>
    </alternativeName>
</protein>
<accession>P02992</accession>
<accession>D6W2P3</accession>
<keyword id="KW-0251">Elongation factor</keyword>
<keyword id="KW-0342">GTP-binding</keyword>
<keyword id="KW-0496">Mitochondrion</keyword>
<keyword id="KW-0547">Nucleotide-binding</keyword>
<keyword id="KW-0648">Protein biosynthesis</keyword>
<keyword id="KW-1185">Reference proteome</keyword>
<keyword id="KW-0809">Transit peptide</keyword>
<organism>
    <name type="scientific">Saccharomyces cerevisiae (strain ATCC 204508 / S288c)</name>
    <name type="common">Baker's yeast</name>
    <dbReference type="NCBI Taxonomy" id="559292"/>
    <lineage>
        <taxon>Eukaryota</taxon>
        <taxon>Fungi</taxon>
        <taxon>Dikarya</taxon>
        <taxon>Ascomycota</taxon>
        <taxon>Saccharomycotina</taxon>
        <taxon>Saccharomycetes</taxon>
        <taxon>Saccharomycetales</taxon>
        <taxon>Saccharomycetaceae</taxon>
        <taxon>Saccharomyces</taxon>
    </lineage>
</organism>
<name>EFTU_YEAST</name>
<evidence type="ECO:0000250" key="1"/>
<evidence type="ECO:0000269" key="2">
    <source>
    </source>
</evidence>
<evidence type="ECO:0000269" key="3">
    <source>
    </source>
</evidence>
<evidence type="ECO:0000269" key="4">
    <source>
    </source>
</evidence>
<evidence type="ECO:0000269" key="5">
    <source>
    </source>
</evidence>
<evidence type="ECO:0000269" key="6">
    <source>
    </source>
</evidence>
<evidence type="ECO:0000305" key="7"/>
<sequence length="437" mass="47972">MSALLPRLLTRTAFKASGKLLRLSSVISRTFSQTTTSYAAAFDRSKPHVNIGTIGHVDHGKTTLTAAITKTLAAKGGANFLDYAAIDKAPEERARGITISTAHVEYETAKRHYSHVDCPGHADYIKNMITGAAQMDGAIIVVAATDGQMPQTREHLLLARQVGVQHIVVFVNKVDTIDDPEMLELVEMEMRELLNEYGFDGDNAPIIMGSALCALEGRQPEIGEQAIMKLLDAVDEYIPTPERDLNKPFLMPVEDIFSISGRGTVVTGRVERGNLKKGEELEIVGHNSTPLKTTVTGIEMFRKELDSAMAGDNAGVLLRGIRRDQLKRGMVLAKPGTVKAHTKILASLYILSKEEGGRHSGFGENYRPQMFIRTADVTVVMRFPKEVEDHSMQVMPGDNVEMECDLIHPTPLEVGQRFNIREGGRTVGTGLITRIIE</sequence>
<comment type="function">
    <text evidence="5">G-protein that, in its active GTP-bound form, binds to and delivers aminoacyl-tRNA to the A-site of ribosomes during protein biosynthesis. In the presence of a correct codon-anticodon match between the aminoacyl-tRNA and the A-site codon of the ribosome-bound mRNA, the ribosome acts as a GTPase activator and the GTP is hydrolyzed. The inactive GDP-bound form leaves the ribosome and must be recycled before binding another molecule of aminoacyl-tRNA. Required for mitochondrial protein biosynthesis and maintenance of mitochondrial DNA.</text>
</comment>
<comment type="pathway">
    <text>Protein biosynthesis; polypeptide chain elongation.</text>
</comment>
<comment type="subcellular location">
    <subcellularLocation>
        <location evidence="2 4">Mitochondrion</location>
    </subcellularLocation>
</comment>
<comment type="PTM">
    <text evidence="6">The precursor is processed in two steps involving mitochondrial intermediate peptidase (MIP) and mitochondrial processing peptidase (MPP).</text>
</comment>
<comment type="miscellaneous">
    <text evidence="3">Present with 58527 molecules/cell in log phase SD medium.</text>
</comment>
<comment type="similarity">
    <text evidence="7">Belongs to the TRAFAC class translation factor GTPase superfamily. Classic translation factor GTPase family. EF-Tu/EF-1A subfamily.</text>
</comment>
<proteinExistence type="evidence at protein level"/>